<reference key="1">
    <citation type="journal article" date="1999" name="Planta">
        <title>The Arabidopsis extensin gene is developmentally regulated, is induced by wounding, methyl jasmonate, abscisic and salicylic acid, and codes for a protein with unusual motifs.</title>
        <authorList>
            <person name="Merkouropoulos G."/>
            <person name="Barnett D.C."/>
            <person name="Shirsat A.H."/>
        </authorList>
    </citation>
    <scope>NUCLEOTIDE SEQUENCE [GENOMIC DNA]</scope>
    <source>
        <strain>cv. Landsberg erecta</strain>
    </source>
</reference>
<reference key="2">
    <citation type="journal article" date="2001" name="DNA Res.">
        <title>Characterization of four extensin genes in Arabidopsis thaliana by differential gene expression under stress and non-stress conditions.</title>
        <authorList>
            <person name="Yoshiba Y."/>
            <person name="Aoki C."/>
            <person name="Iuchi S."/>
            <person name="Nanjo T."/>
            <person name="Seki M."/>
            <person name="Sekiguchi F."/>
            <person name="Yamaguchi-Shinozaki K."/>
            <person name="Shinozaki K."/>
        </authorList>
    </citation>
    <scope>NUCLEOTIDE SEQUENCE [MRNA] (ISOFORM 2)</scope>
    <source>
        <strain>cv. Columbia</strain>
    </source>
</reference>
<reference key="3">
    <citation type="journal article" date="2000" name="Nature">
        <title>Sequence and analysis of chromosome 1 of the plant Arabidopsis thaliana.</title>
        <authorList>
            <person name="Theologis A."/>
            <person name="Ecker J.R."/>
            <person name="Palm C.J."/>
            <person name="Federspiel N.A."/>
            <person name="Kaul S."/>
            <person name="White O."/>
            <person name="Alonso J."/>
            <person name="Altafi H."/>
            <person name="Araujo R."/>
            <person name="Bowman C.L."/>
            <person name="Brooks S.Y."/>
            <person name="Buehler E."/>
            <person name="Chan A."/>
            <person name="Chao Q."/>
            <person name="Chen H."/>
            <person name="Cheuk R.F."/>
            <person name="Chin C.W."/>
            <person name="Chung M.K."/>
            <person name="Conn L."/>
            <person name="Conway A.B."/>
            <person name="Conway A.R."/>
            <person name="Creasy T.H."/>
            <person name="Dewar K."/>
            <person name="Dunn P."/>
            <person name="Etgu P."/>
            <person name="Feldblyum T.V."/>
            <person name="Feng J.-D."/>
            <person name="Fong B."/>
            <person name="Fujii C.Y."/>
            <person name="Gill J.E."/>
            <person name="Goldsmith A.D."/>
            <person name="Haas B."/>
            <person name="Hansen N.F."/>
            <person name="Hughes B."/>
            <person name="Huizar L."/>
            <person name="Hunter J.L."/>
            <person name="Jenkins J."/>
            <person name="Johnson-Hopson C."/>
            <person name="Khan S."/>
            <person name="Khaykin E."/>
            <person name="Kim C.J."/>
            <person name="Koo H.L."/>
            <person name="Kremenetskaia I."/>
            <person name="Kurtz D.B."/>
            <person name="Kwan A."/>
            <person name="Lam B."/>
            <person name="Langin-Hooper S."/>
            <person name="Lee A."/>
            <person name="Lee J.M."/>
            <person name="Lenz C.A."/>
            <person name="Li J.H."/>
            <person name="Li Y.-P."/>
            <person name="Lin X."/>
            <person name="Liu S.X."/>
            <person name="Liu Z.A."/>
            <person name="Luros J.S."/>
            <person name="Maiti R."/>
            <person name="Marziali A."/>
            <person name="Militscher J."/>
            <person name="Miranda M."/>
            <person name="Nguyen M."/>
            <person name="Nierman W.C."/>
            <person name="Osborne B.I."/>
            <person name="Pai G."/>
            <person name="Peterson J."/>
            <person name="Pham P.K."/>
            <person name="Rizzo M."/>
            <person name="Rooney T."/>
            <person name="Rowley D."/>
            <person name="Sakano H."/>
            <person name="Salzberg S.L."/>
            <person name="Schwartz J.R."/>
            <person name="Shinn P."/>
            <person name="Southwick A.M."/>
            <person name="Sun H."/>
            <person name="Tallon L.J."/>
            <person name="Tambunga G."/>
            <person name="Toriumi M.J."/>
            <person name="Town C.D."/>
            <person name="Utterback T."/>
            <person name="Van Aken S."/>
            <person name="Vaysberg M."/>
            <person name="Vysotskaia V.S."/>
            <person name="Walker M."/>
            <person name="Wu D."/>
            <person name="Yu G."/>
            <person name="Fraser C.M."/>
            <person name="Venter J.C."/>
            <person name="Davis R.W."/>
        </authorList>
    </citation>
    <scope>NUCLEOTIDE SEQUENCE [LARGE SCALE GENOMIC DNA]</scope>
    <source>
        <strain>cv. Columbia</strain>
    </source>
</reference>
<reference key="4">
    <citation type="journal article" date="2017" name="Plant J.">
        <title>Araport11: a complete reannotation of the Arabidopsis thaliana reference genome.</title>
        <authorList>
            <person name="Cheng C.Y."/>
            <person name="Krishnakumar V."/>
            <person name="Chan A.P."/>
            <person name="Thibaud-Nissen F."/>
            <person name="Schobel S."/>
            <person name="Town C.D."/>
        </authorList>
    </citation>
    <scope>GENOME REANNOTATION</scope>
    <source>
        <strain>cv. Columbia</strain>
    </source>
</reference>
<reference key="5">
    <citation type="journal article" date="2010" name="Plant Physiol.">
        <title>A bioinformatics approach to the identification, classification, and analysis of hydroxyproline-rich glycoproteins.</title>
        <authorList>
            <person name="Showalter A.M."/>
            <person name="Keppler B."/>
            <person name="Lichtenberg J."/>
            <person name="Gu D."/>
            <person name="Welch L.R."/>
        </authorList>
    </citation>
    <scope>GENE FAMILY</scope>
    <scope>NOMENCLATURE</scope>
</reference>
<dbReference type="EMBL" id="U43627">
    <property type="protein sequence ID" value="AAA85899.1"/>
    <property type="status" value="ALT_SEQ"/>
    <property type="molecule type" value="Genomic_DNA"/>
</dbReference>
<dbReference type="EMBL" id="AB031820">
    <property type="protein sequence ID" value="BAB20085.1"/>
    <property type="molecule type" value="mRNA"/>
</dbReference>
<dbReference type="EMBL" id="AC002291">
    <property type="protein sequence ID" value="AAC00630.1"/>
    <property type="molecule type" value="Genomic_DNA"/>
</dbReference>
<dbReference type="EMBL" id="CP002684">
    <property type="protein sequence ID" value="AEE35904.1"/>
    <property type="status" value="ALT_SEQ"/>
    <property type="molecule type" value="Genomic_DNA"/>
</dbReference>
<dbReference type="EMBL" id="CP002684">
    <property type="protein sequence ID" value="AEE35905.1"/>
    <property type="status" value="ALT_SEQ"/>
    <property type="molecule type" value="Genomic_DNA"/>
</dbReference>
<dbReference type="PIR" id="B96798">
    <property type="entry name" value="B96798"/>
</dbReference>
<dbReference type="RefSeq" id="NP_565143.1">
    <property type="nucleotide sequence ID" value="NM_106344.3"/>
</dbReference>
<dbReference type="RefSeq" id="NP_849895.1">
    <property type="nucleotide sequence ID" value="NM_179564.1"/>
</dbReference>
<dbReference type="STRING" id="3702.Q38913"/>
<dbReference type="PaxDb" id="3702-AT1G76930.1"/>
<dbReference type="ProteomicsDB" id="222311">
    <molecule id="Q38913-1"/>
</dbReference>
<dbReference type="GeneID" id="844028"/>
<dbReference type="KEGG" id="ath:AT1G76930"/>
<dbReference type="Araport" id="AT1G76930"/>
<dbReference type="TAIR" id="AT1G76930"/>
<dbReference type="InParanoid" id="Q38913"/>
<dbReference type="PRO" id="PR:Q38913"/>
<dbReference type="Proteomes" id="UP000006548">
    <property type="component" value="Chromosome 1"/>
</dbReference>
<dbReference type="GO" id="GO:0005576">
    <property type="term" value="C:extracellular region"/>
    <property type="evidence" value="ECO:0007669"/>
    <property type="project" value="UniProtKB-KW"/>
</dbReference>
<dbReference type="GO" id="GO:0009530">
    <property type="term" value="C:primary cell wall"/>
    <property type="evidence" value="ECO:0007669"/>
    <property type="project" value="UniProtKB-SubCell"/>
</dbReference>
<dbReference type="GO" id="GO:0005199">
    <property type="term" value="F:structural constituent of cell wall"/>
    <property type="evidence" value="ECO:0000304"/>
    <property type="project" value="TAIR"/>
</dbReference>
<dbReference type="GO" id="GO:0009664">
    <property type="term" value="P:plant-type cell wall organization"/>
    <property type="evidence" value="ECO:0007669"/>
    <property type="project" value="InterPro"/>
</dbReference>
<dbReference type="GO" id="GO:0009737">
    <property type="term" value="P:response to abscisic acid"/>
    <property type="evidence" value="ECO:0000270"/>
    <property type="project" value="TAIR"/>
</dbReference>
<dbReference type="GO" id="GO:0009753">
    <property type="term" value="P:response to jasmonic acid"/>
    <property type="evidence" value="ECO:0000270"/>
    <property type="project" value="TAIR"/>
</dbReference>
<dbReference type="GO" id="GO:0009751">
    <property type="term" value="P:response to salicylic acid"/>
    <property type="evidence" value="ECO:0000270"/>
    <property type="project" value="TAIR"/>
</dbReference>
<dbReference type="GO" id="GO:0009611">
    <property type="term" value="P:response to wounding"/>
    <property type="evidence" value="ECO:0000270"/>
    <property type="project" value="TAIR"/>
</dbReference>
<dbReference type="InterPro" id="IPR006706">
    <property type="entry name" value="Extensin_dom"/>
</dbReference>
<dbReference type="Pfam" id="PF04554">
    <property type="entry name" value="Extensin_2"/>
    <property type="match status" value="1"/>
</dbReference>
<sequence length="373" mass="41555">MASFLVLAFSLAFVSQTTANYFYSSPPPPVKHYSPPPVYKSPPPPVKHYSPPPVYKSPPPPVKHYSPPPVYKSPPPPVKYYSPPPVYKSPPPPVYKSPPPPVKHYSPPPVYKSPPPPVKHYSPPPVYKSPPPPVKHYSPPPVYKSPPPPVKHYSPPPVYKSPPPPVKYYSPPPVYKSPPPPVKHYSPPPVYKSPPPPVKYYSPPPVYKSPPPPVKHYSPPPVYKSPPPPVKYYSPPPVYKSPPPPVHYSPPPVVYHSPPPPVHYSPPPVVYHSPPPPVHYSPPPVVYHSPPPPVHYSPPPVVYHSPPPPVHYSPPPVVYHSPPPPKKHYEYKSPPPPVHYSPPTVYHSPPPPVHHYSPPHQPYLYKSPPPPHY</sequence>
<gene>
    <name evidence="3" type="primary">EXT1</name>
    <name evidence="4" type="synonym">EXT1/4</name>
    <name evidence="3" type="synonym">EXT4</name>
    <name type="ordered locus">At1g76930</name>
    <name type="ORF">F22K20.3</name>
</gene>
<keyword id="KW-0025">Alternative splicing</keyword>
<keyword id="KW-0134">Cell wall</keyword>
<keyword id="KW-0961">Cell wall biogenesis/degradation</keyword>
<keyword id="KW-0325">Glycoprotein</keyword>
<keyword id="KW-0379">Hydroxylation</keyword>
<keyword id="KW-1185">Reference proteome</keyword>
<keyword id="KW-0677">Repeat</keyword>
<keyword id="KW-0964">Secreted</keyword>
<keyword id="KW-0732">Signal</keyword>
<feature type="signal peptide" evidence="1">
    <location>
        <begin position="1"/>
        <end position="19"/>
    </location>
</feature>
<feature type="chain" id="PRO_0000008725" description="Extensin-1">
    <location>
        <begin position="20"/>
        <end position="373"/>
    </location>
</feature>
<feature type="repeat" description="1-1">
    <location>
        <begin position="25"/>
        <end position="33"/>
    </location>
</feature>
<feature type="repeat" description="2-1">
    <location>
        <begin position="34"/>
        <end position="40"/>
    </location>
</feature>
<feature type="repeat" description="1-2">
    <location>
        <begin position="41"/>
        <end position="49"/>
    </location>
</feature>
<feature type="repeat" description="2-2">
    <location>
        <begin position="50"/>
        <end position="56"/>
    </location>
</feature>
<feature type="repeat" description="1-3">
    <location>
        <begin position="57"/>
        <end position="65"/>
    </location>
</feature>
<feature type="repeat" description="2-3">
    <location>
        <begin position="66"/>
        <end position="72"/>
    </location>
</feature>
<feature type="repeat" description="1-4">
    <location>
        <begin position="73"/>
        <end position="81"/>
    </location>
</feature>
<feature type="repeat" description="2-4">
    <location>
        <begin position="82"/>
        <end position="88"/>
    </location>
</feature>
<feature type="repeat" description="1-5">
    <location>
        <begin position="97"/>
        <end position="105"/>
    </location>
</feature>
<feature type="repeat" description="2-5">
    <location>
        <begin position="106"/>
        <end position="112"/>
    </location>
</feature>
<feature type="repeat" description="1-6">
    <location>
        <begin position="113"/>
        <end position="121"/>
    </location>
</feature>
<feature type="repeat" description="2-6">
    <location>
        <begin position="122"/>
        <end position="128"/>
    </location>
</feature>
<feature type="repeat" description="1-7">
    <location>
        <begin position="129"/>
        <end position="137"/>
    </location>
</feature>
<feature type="repeat" description="2-7">
    <location>
        <begin position="138"/>
        <end position="144"/>
    </location>
</feature>
<feature type="repeat" description="1-8">
    <location>
        <begin position="145"/>
        <end position="153"/>
    </location>
</feature>
<feature type="repeat" description="2-8">
    <location>
        <begin position="154"/>
        <end position="160"/>
    </location>
</feature>
<feature type="repeat" description="1-9">
    <location>
        <begin position="161"/>
        <end position="169"/>
    </location>
</feature>
<feature type="repeat" description="2-9">
    <location>
        <begin position="170"/>
        <end position="176"/>
    </location>
</feature>
<feature type="repeat" description="1-10">
    <location>
        <begin position="177"/>
        <end position="185"/>
    </location>
</feature>
<feature type="repeat" description="2-10">
    <location>
        <begin position="186"/>
        <end position="192"/>
    </location>
</feature>
<feature type="repeat" description="1-11">
    <location>
        <begin position="193"/>
        <end position="201"/>
    </location>
</feature>
<feature type="repeat" description="2-11">
    <location>
        <begin position="202"/>
        <end position="208"/>
    </location>
</feature>
<feature type="repeat" description="1-12">
    <location>
        <begin position="209"/>
        <end position="217"/>
    </location>
</feature>
<feature type="repeat" description="2-12">
    <location>
        <begin position="218"/>
        <end position="224"/>
    </location>
</feature>
<feature type="repeat" description="1-13">
    <location>
        <begin position="225"/>
        <end position="233"/>
    </location>
</feature>
<feature type="repeat" description="2-13">
    <location>
        <begin position="234"/>
        <end position="240"/>
    </location>
</feature>
<feature type="repeat" description="3-1">
    <location>
        <begin position="241"/>
        <end position="248"/>
    </location>
</feature>
<feature type="repeat" description="4-1">
    <location>
        <begin position="249"/>
        <end position="256"/>
    </location>
</feature>
<feature type="repeat" description="3-2">
    <location>
        <begin position="257"/>
        <end position="264"/>
    </location>
</feature>
<feature type="repeat" description="4-2">
    <location>
        <begin position="265"/>
        <end position="272"/>
    </location>
</feature>
<feature type="repeat" description="3-3">
    <location>
        <begin position="273"/>
        <end position="280"/>
    </location>
</feature>
<feature type="repeat" description="4-3">
    <location>
        <begin position="281"/>
        <end position="288"/>
    </location>
</feature>
<feature type="repeat" description="3-4">
    <location>
        <begin position="289"/>
        <end position="296"/>
    </location>
</feature>
<feature type="repeat" description="4-4">
    <location>
        <begin position="297"/>
        <end position="304"/>
    </location>
</feature>
<feature type="repeat" description="3-5">
    <location>
        <begin position="305"/>
        <end position="312"/>
    </location>
</feature>
<feature type="repeat" description="4-5">
    <location>
        <begin position="313"/>
        <end position="320"/>
    </location>
</feature>
<feature type="region of interest" description="13 X 9 AA repeats of S-P-P-P-P-V-K-[HY]-Y">
    <location>
        <begin position="25"/>
        <end position="233"/>
    </location>
</feature>
<feature type="region of interest" description="13 X 7 AA repeats of S-P-P-P-V-Y-K">
    <location>
        <begin position="34"/>
        <end position="240"/>
    </location>
</feature>
<feature type="region of interest" description="5 X 8 AA repeats of S-P-P-P-P-V-H-Y">
    <location>
        <begin position="241"/>
        <end position="312"/>
    </location>
</feature>
<feature type="region of interest" description="5 X 8 AA repeats of S-P-P-P-V-V-Y-H">
    <location>
        <begin position="249"/>
        <end position="320"/>
    </location>
</feature>
<feature type="region of interest" description="Isodityrosine cross-linking" evidence="1">
    <location>
        <begin position="329"/>
        <end position="332"/>
    </location>
</feature>
<feature type="region of interest" description="Disordered" evidence="2">
    <location>
        <begin position="349"/>
        <end position="373"/>
    </location>
</feature>
<feature type="region of interest" description="Isodityrosine cross-linking" evidence="1">
    <location>
        <begin position="363"/>
        <end position="366"/>
    </location>
</feature>
<feature type="splice variant" id="VSP_008897" description="In isoform 2." evidence="3">
    <location>
        <begin position="152"/>
        <end position="278"/>
    </location>
</feature>
<feature type="sequence conflict" description="In Ref. 1; AAA85899." evidence="5" ref="1">
    <location>
        <begin position="95"/>
        <end position="182"/>
    </location>
</feature>
<feature type="sequence conflict" description="In Ref. 1; AAA85899." evidence="5" ref="1">
    <location>
        <position position="334"/>
    </location>
</feature>
<evidence type="ECO:0000255" key="1"/>
<evidence type="ECO:0000256" key="2">
    <source>
        <dbReference type="SAM" id="MobiDB-lite"/>
    </source>
</evidence>
<evidence type="ECO:0000303" key="3">
    <source>
    </source>
</evidence>
<evidence type="ECO:0000303" key="4">
    <source>
    </source>
</evidence>
<evidence type="ECO:0000305" key="5"/>
<comment type="function">
    <text>Structural component which strengthens the primary cell wall.</text>
</comment>
<comment type="subcellular location">
    <subcellularLocation>
        <location>Secreted</location>
        <location>Primary cell wall</location>
    </subcellularLocation>
</comment>
<comment type="alternative products">
    <event type="alternative splicing"/>
    <isoform>
        <id>Q38913-1</id>
        <name>1</name>
        <sequence type="displayed"/>
    </isoform>
    <isoform>
        <id>Q38913-2</id>
        <name>2</name>
        <sequence type="described" ref="VSP_008897"/>
    </isoform>
    <text>Experimental confirmation may be lacking for some isoforms.</text>
</comment>
<comment type="tissue specificity">
    <text>Predominantly expressed in the roots. Not detected in the leaves, nor in flowers or flower buds. Wounding reverses this pattern, turning on the gene in the leaves and repressing it in the roots.</text>
</comment>
<comment type="developmental stage">
    <text>Early expressed in the whole plant. Detected in the leaves of 2 and 4 weeks old rosettes, but not in 6-weeks-old rosettes. Detected specifically in roots from the mature plant (6-weeks old).</text>
</comment>
<comment type="induction">
    <text>By wounding, water and cold stresses; in response to plant hormones 2,4-D, BAP, GA3, SA, MeJA and ABA treatment; in response to L-Ser, Hyp and L-Pro treatment.</text>
</comment>
<comment type="PTM">
    <text>Extensins contain a characteristic repeat of the pentapeptide Ser-Pro(4). For this particular extensin, a typical repeat of Ser-Pro(3) is found. In both cases, the proline residues are hydroxylated and then O-glycosylated (arabinosylation).</text>
</comment>
<comment type="PTM">
    <text>Synthetised as soluble proteins which become insolubilised in the cell wall through the intermolecular cross-linking of Tyr on adjacent monomers. Isodityrosine (IDT) stabilizes and makes rigid the part of the polypeptide where IDT functional sites are present.</text>
</comment>
<comment type="similarity">
    <text evidence="5">Belongs to the extensin family.</text>
</comment>
<comment type="sequence caution" evidence="5">
    <conflict type="miscellaneous discrepancy">
        <sequence resource="EMBL-CDS" id="AAA85899"/>
    </conflict>
    <text>In cv. Landsberg erecta, absence of several repeats.</text>
</comment>
<comment type="sequence caution" evidence="5">
    <conflict type="erroneous gene model prediction">
        <sequence resource="EMBL-CDS" id="AEE35904"/>
    </conflict>
</comment>
<comment type="sequence caution" evidence="5">
    <conflict type="erroneous gene model prediction">
        <sequence resource="EMBL-CDS" id="AEE35905"/>
    </conflict>
</comment>
<organism>
    <name type="scientific">Arabidopsis thaliana</name>
    <name type="common">Mouse-ear cress</name>
    <dbReference type="NCBI Taxonomy" id="3702"/>
    <lineage>
        <taxon>Eukaryota</taxon>
        <taxon>Viridiplantae</taxon>
        <taxon>Streptophyta</taxon>
        <taxon>Embryophyta</taxon>
        <taxon>Tracheophyta</taxon>
        <taxon>Spermatophyta</taxon>
        <taxon>Magnoliopsida</taxon>
        <taxon>eudicotyledons</taxon>
        <taxon>Gunneridae</taxon>
        <taxon>Pentapetalae</taxon>
        <taxon>rosids</taxon>
        <taxon>malvids</taxon>
        <taxon>Brassicales</taxon>
        <taxon>Brassicaceae</taxon>
        <taxon>Camelineae</taxon>
        <taxon>Arabidopsis</taxon>
    </lineage>
</organism>
<proteinExistence type="evidence at transcript level"/>
<accession>Q38913</accession>
<accession>F4I433</accession>
<accession>F4I434</accession>
<accession>Q9FS15</accession>
<accession>Q9SAW2</accession>
<protein>
    <recommendedName>
        <fullName evidence="3">Extensin-1</fullName>
        <shortName evidence="3">AtExt1</shortName>
        <shortName evidence="3">AtExt4</shortName>
    </recommendedName>
    <alternativeName>
        <fullName evidence="4">Extensin-1/4</fullName>
    </alternativeName>
</protein>
<name>EXTN1_ARATH</name>